<feature type="chain" id="PRO_1000125171" description="Adenylate kinase">
    <location>
        <begin position="1"/>
        <end position="214"/>
    </location>
</feature>
<feature type="region of interest" description="NMP" evidence="1">
    <location>
        <begin position="30"/>
        <end position="59"/>
    </location>
</feature>
<feature type="region of interest" description="LID" evidence="1">
    <location>
        <begin position="122"/>
        <end position="159"/>
    </location>
</feature>
<feature type="binding site" evidence="1">
    <location>
        <begin position="10"/>
        <end position="15"/>
    </location>
    <ligand>
        <name>ATP</name>
        <dbReference type="ChEBI" id="CHEBI:30616"/>
    </ligand>
</feature>
<feature type="binding site" evidence="1">
    <location>
        <position position="31"/>
    </location>
    <ligand>
        <name>AMP</name>
        <dbReference type="ChEBI" id="CHEBI:456215"/>
    </ligand>
</feature>
<feature type="binding site" evidence="1">
    <location>
        <position position="36"/>
    </location>
    <ligand>
        <name>AMP</name>
        <dbReference type="ChEBI" id="CHEBI:456215"/>
    </ligand>
</feature>
<feature type="binding site" evidence="1">
    <location>
        <begin position="57"/>
        <end position="59"/>
    </location>
    <ligand>
        <name>AMP</name>
        <dbReference type="ChEBI" id="CHEBI:456215"/>
    </ligand>
</feature>
<feature type="binding site" evidence="1">
    <location>
        <begin position="85"/>
        <end position="88"/>
    </location>
    <ligand>
        <name>AMP</name>
        <dbReference type="ChEBI" id="CHEBI:456215"/>
    </ligand>
</feature>
<feature type="binding site" evidence="1">
    <location>
        <position position="92"/>
    </location>
    <ligand>
        <name>AMP</name>
        <dbReference type="ChEBI" id="CHEBI:456215"/>
    </ligand>
</feature>
<feature type="binding site" evidence="1">
    <location>
        <position position="123"/>
    </location>
    <ligand>
        <name>ATP</name>
        <dbReference type="ChEBI" id="CHEBI:30616"/>
    </ligand>
</feature>
<feature type="binding site" evidence="1">
    <location>
        <begin position="132"/>
        <end position="133"/>
    </location>
    <ligand>
        <name>ATP</name>
        <dbReference type="ChEBI" id="CHEBI:30616"/>
    </ligand>
</feature>
<feature type="binding site" evidence="1">
    <location>
        <position position="156"/>
    </location>
    <ligand>
        <name>AMP</name>
        <dbReference type="ChEBI" id="CHEBI:456215"/>
    </ligand>
</feature>
<feature type="binding site" evidence="1">
    <location>
        <position position="167"/>
    </location>
    <ligand>
        <name>AMP</name>
        <dbReference type="ChEBI" id="CHEBI:456215"/>
    </ligand>
</feature>
<feature type="binding site" evidence="1">
    <location>
        <position position="200"/>
    </location>
    <ligand>
        <name>ATP</name>
        <dbReference type="ChEBI" id="CHEBI:30616"/>
    </ligand>
</feature>
<organism>
    <name type="scientific">Vibrio atlanticus (strain LGP32)</name>
    <name type="common">Vibrio splendidus (strain Mel32)</name>
    <dbReference type="NCBI Taxonomy" id="575788"/>
    <lineage>
        <taxon>Bacteria</taxon>
        <taxon>Pseudomonadati</taxon>
        <taxon>Pseudomonadota</taxon>
        <taxon>Gammaproteobacteria</taxon>
        <taxon>Vibrionales</taxon>
        <taxon>Vibrionaceae</taxon>
        <taxon>Vibrio</taxon>
    </lineage>
</organism>
<protein>
    <recommendedName>
        <fullName evidence="1">Adenylate kinase</fullName>
        <shortName evidence="1">AK</shortName>
        <ecNumber evidence="1">2.7.4.3</ecNumber>
    </recommendedName>
    <alternativeName>
        <fullName evidence="1">ATP-AMP transphosphorylase</fullName>
    </alternativeName>
    <alternativeName>
        <fullName evidence="1">ATP:AMP phosphotransferase</fullName>
    </alternativeName>
    <alternativeName>
        <fullName evidence="1">Adenylate monophosphate kinase</fullName>
    </alternativeName>
</protein>
<name>KAD_VIBA3</name>
<reference key="1">
    <citation type="submission" date="2009-02" db="EMBL/GenBank/DDBJ databases">
        <title>Vibrio splendidus str. LGP32 complete genome.</title>
        <authorList>
            <person name="Mazel D."/>
            <person name="Le Roux F."/>
        </authorList>
    </citation>
    <scope>NUCLEOTIDE SEQUENCE [LARGE SCALE GENOMIC DNA]</scope>
    <source>
        <strain>LGP32</strain>
    </source>
</reference>
<accession>B7VII5</accession>
<sequence length="214" mass="23324">MRIILLGAPGAGKGTQANFIMNKFGIPQISTGDMLRAAIKAGTELGKQAKSVIDAGQLVSDEIILGLIKERIAQDDCEKGFLLDGFPRTIPQADGLKEMGIAVDYVVEFDVADDVIVERMAGRRAHLPSGRTYHNVYNPPKEEGKDDITGEELVVRDDDKEETVRARLGVYHDQTAPLISYYGKEAEAGNTKYLKFDGTKQVAEVSAELEKALA</sequence>
<proteinExistence type="inferred from homology"/>
<comment type="function">
    <text evidence="1">Catalyzes the reversible transfer of the terminal phosphate group between ATP and AMP. Plays an important role in cellular energy homeostasis and in adenine nucleotide metabolism.</text>
</comment>
<comment type="catalytic activity">
    <reaction evidence="1">
        <text>AMP + ATP = 2 ADP</text>
        <dbReference type="Rhea" id="RHEA:12973"/>
        <dbReference type="ChEBI" id="CHEBI:30616"/>
        <dbReference type="ChEBI" id="CHEBI:456215"/>
        <dbReference type="ChEBI" id="CHEBI:456216"/>
        <dbReference type="EC" id="2.7.4.3"/>
    </reaction>
</comment>
<comment type="pathway">
    <text evidence="1">Purine metabolism; AMP biosynthesis via salvage pathway; AMP from ADP: step 1/1.</text>
</comment>
<comment type="subunit">
    <text evidence="1">Monomer.</text>
</comment>
<comment type="subcellular location">
    <subcellularLocation>
        <location evidence="1">Cytoplasm</location>
    </subcellularLocation>
</comment>
<comment type="domain">
    <text evidence="1">Consists of three domains, a large central CORE domain and two small peripheral domains, NMPbind and LID, which undergo movements during catalysis. The LID domain closes over the site of phosphoryl transfer upon ATP binding. Assembling and dissambling the active center during each catalytic cycle provides an effective means to prevent ATP hydrolysis.</text>
</comment>
<comment type="similarity">
    <text evidence="1">Belongs to the adenylate kinase family.</text>
</comment>
<evidence type="ECO:0000255" key="1">
    <source>
        <dbReference type="HAMAP-Rule" id="MF_00235"/>
    </source>
</evidence>
<dbReference type="EC" id="2.7.4.3" evidence="1"/>
<dbReference type="EMBL" id="FM954972">
    <property type="protein sequence ID" value="CAV19431.1"/>
    <property type="molecule type" value="Genomic_DNA"/>
</dbReference>
<dbReference type="SMR" id="B7VII5"/>
<dbReference type="STRING" id="575788.VS_2268"/>
<dbReference type="KEGG" id="vsp:VS_2268"/>
<dbReference type="eggNOG" id="COG0563">
    <property type="taxonomic scope" value="Bacteria"/>
</dbReference>
<dbReference type="HOGENOM" id="CLU_032354_1_2_6"/>
<dbReference type="UniPathway" id="UPA00588">
    <property type="reaction ID" value="UER00649"/>
</dbReference>
<dbReference type="Proteomes" id="UP000009100">
    <property type="component" value="Chromosome 1"/>
</dbReference>
<dbReference type="GO" id="GO:0005737">
    <property type="term" value="C:cytoplasm"/>
    <property type="evidence" value="ECO:0007669"/>
    <property type="project" value="UniProtKB-SubCell"/>
</dbReference>
<dbReference type="GO" id="GO:0004017">
    <property type="term" value="F:adenylate kinase activity"/>
    <property type="evidence" value="ECO:0007669"/>
    <property type="project" value="UniProtKB-UniRule"/>
</dbReference>
<dbReference type="GO" id="GO:0005524">
    <property type="term" value="F:ATP binding"/>
    <property type="evidence" value="ECO:0007669"/>
    <property type="project" value="UniProtKB-UniRule"/>
</dbReference>
<dbReference type="GO" id="GO:0044209">
    <property type="term" value="P:AMP salvage"/>
    <property type="evidence" value="ECO:0007669"/>
    <property type="project" value="UniProtKB-UniRule"/>
</dbReference>
<dbReference type="CDD" id="cd01428">
    <property type="entry name" value="ADK"/>
    <property type="match status" value="1"/>
</dbReference>
<dbReference type="FunFam" id="3.40.50.300:FF:000106">
    <property type="entry name" value="Adenylate kinase mitochondrial"/>
    <property type="match status" value="1"/>
</dbReference>
<dbReference type="Gene3D" id="3.40.50.300">
    <property type="entry name" value="P-loop containing nucleotide triphosphate hydrolases"/>
    <property type="match status" value="1"/>
</dbReference>
<dbReference type="HAMAP" id="MF_00235">
    <property type="entry name" value="Adenylate_kinase_Adk"/>
    <property type="match status" value="1"/>
</dbReference>
<dbReference type="InterPro" id="IPR006259">
    <property type="entry name" value="Adenyl_kin_sub"/>
</dbReference>
<dbReference type="InterPro" id="IPR000850">
    <property type="entry name" value="Adenylat/UMP-CMP_kin"/>
</dbReference>
<dbReference type="InterPro" id="IPR033690">
    <property type="entry name" value="Adenylat_kinase_CS"/>
</dbReference>
<dbReference type="InterPro" id="IPR007862">
    <property type="entry name" value="Adenylate_kinase_lid-dom"/>
</dbReference>
<dbReference type="InterPro" id="IPR027417">
    <property type="entry name" value="P-loop_NTPase"/>
</dbReference>
<dbReference type="NCBIfam" id="TIGR01351">
    <property type="entry name" value="adk"/>
    <property type="match status" value="1"/>
</dbReference>
<dbReference type="NCBIfam" id="NF001379">
    <property type="entry name" value="PRK00279.1-1"/>
    <property type="match status" value="1"/>
</dbReference>
<dbReference type="NCBIfam" id="NF001380">
    <property type="entry name" value="PRK00279.1-2"/>
    <property type="match status" value="1"/>
</dbReference>
<dbReference type="NCBIfam" id="NF001381">
    <property type="entry name" value="PRK00279.1-3"/>
    <property type="match status" value="1"/>
</dbReference>
<dbReference type="PANTHER" id="PTHR23359">
    <property type="entry name" value="NUCLEOTIDE KINASE"/>
    <property type="match status" value="1"/>
</dbReference>
<dbReference type="Pfam" id="PF00406">
    <property type="entry name" value="ADK"/>
    <property type="match status" value="1"/>
</dbReference>
<dbReference type="Pfam" id="PF05191">
    <property type="entry name" value="ADK_lid"/>
    <property type="match status" value="1"/>
</dbReference>
<dbReference type="PRINTS" id="PR00094">
    <property type="entry name" value="ADENYLTKNASE"/>
</dbReference>
<dbReference type="SUPFAM" id="SSF52540">
    <property type="entry name" value="P-loop containing nucleoside triphosphate hydrolases"/>
    <property type="match status" value="1"/>
</dbReference>
<dbReference type="PROSITE" id="PS00113">
    <property type="entry name" value="ADENYLATE_KINASE"/>
    <property type="match status" value="1"/>
</dbReference>
<keyword id="KW-0067">ATP-binding</keyword>
<keyword id="KW-0963">Cytoplasm</keyword>
<keyword id="KW-0418">Kinase</keyword>
<keyword id="KW-0545">Nucleotide biosynthesis</keyword>
<keyword id="KW-0547">Nucleotide-binding</keyword>
<keyword id="KW-0808">Transferase</keyword>
<gene>
    <name evidence="1" type="primary">adk</name>
    <name type="ordered locus">VS_2268</name>
</gene>